<proteinExistence type="inferred from homology"/>
<accession>A4J100</accession>
<gene>
    <name evidence="1" type="primary">rplA</name>
    <name type="ordered locus">Dred_0204</name>
</gene>
<comment type="function">
    <text evidence="1">Binds directly to 23S rRNA. The L1 stalk is quite mobile in the ribosome, and is involved in E site tRNA release.</text>
</comment>
<comment type="function">
    <text evidence="1">Protein L1 is also a translational repressor protein, it controls the translation of the L11 operon by binding to its mRNA.</text>
</comment>
<comment type="subunit">
    <text evidence="1">Part of the 50S ribosomal subunit.</text>
</comment>
<comment type="similarity">
    <text evidence="1">Belongs to the universal ribosomal protein uL1 family.</text>
</comment>
<reference key="1">
    <citation type="submission" date="2007-03" db="EMBL/GenBank/DDBJ databases">
        <title>Complete sequence of Desulfotomaculum reducens MI-1.</title>
        <authorList>
            <consortium name="US DOE Joint Genome Institute"/>
            <person name="Copeland A."/>
            <person name="Lucas S."/>
            <person name="Lapidus A."/>
            <person name="Barry K."/>
            <person name="Detter J.C."/>
            <person name="Glavina del Rio T."/>
            <person name="Hammon N."/>
            <person name="Israni S."/>
            <person name="Dalin E."/>
            <person name="Tice H."/>
            <person name="Pitluck S."/>
            <person name="Sims D."/>
            <person name="Brettin T."/>
            <person name="Bruce D."/>
            <person name="Han C."/>
            <person name="Tapia R."/>
            <person name="Schmutz J."/>
            <person name="Larimer F."/>
            <person name="Land M."/>
            <person name="Hauser L."/>
            <person name="Kyrpides N."/>
            <person name="Kim E."/>
            <person name="Tebo B.M."/>
            <person name="Richardson P."/>
        </authorList>
    </citation>
    <scope>NUCLEOTIDE SEQUENCE [LARGE SCALE GENOMIC DNA]</scope>
    <source>
        <strain>ATCC BAA-1160 / DSM 100696 / MI-1</strain>
    </source>
</reference>
<protein>
    <recommendedName>
        <fullName evidence="1">Large ribosomal subunit protein uL1</fullName>
    </recommendedName>
    <alternativeName>
        <fullName evidence="2">50S ribosomal protein L1</fullName>
    </alternativeName>
</protein>
<sequence length="229" mass="24626">MPKEGKKLQEARKQFDKNTLYEPLEALEMVKKTATAKFDETVEVAFRLGVDPRHADQQLRGAVVLPHGTGKTKTVLVFAKGDKAKEAEAAGADFVGAEDMLEKIQGGWLGFDVAIATPDMMGTVGRLGRVLGPRGLMPNPKTGTVTFEVGDAVRDAKGGKITYRTDKVGIIHAPIGKASFDTQKLAENFKTLADTLVRIKPASAKGTYMKTITVSSTMGPGVRINPNKL</sequence>
<dbReference type="EMBL" id="CP000612">
    <property type="protein sequence ID" value="ABO48753.1"/>
    <property type="molecule type" value="Genomic_DNA"/>
</dbReference>
<dbReference type="RefSeq" id="WP_011876594.1">
    <property type="nucleotide sequence ID" value="NC_009253.1"/>
</dbReference>
<dbReference type="SMR" id="A4J100"/>
<dbReference type="STRING" id="349161.Dred_0204"/>
<dbReference type="KEGG" id="drm:Dred_0204"/>
<dbReference type="eggNOG" id="COG0081">
    <property type="taxonomic scope" value="Bacteria"/>
</dbReference>
<dbReference type="HOGENOM" id="CLU_062853_0_0_9"/>
<dbReference type="OrthoDB" id="9803740at2"/>
<dbReference type="Proteomes" id="UP000001556">
    <property type="component" value="Chromosome"/>
</dbReference>
<dbReference type="GO" id="GO:0015934">
    <property type="term" value="C:large ribosomal subunit"/>
    <property type="evidence" value="ECO:0007669"/>
    <property type="project" value="InterPro"/>
</dbReference>
<dbReference type="GO" id="GO:0019843">
    <property type="term" value="F:rRNA binding"/>
    <property type="evidence" value="ECO:0007669"/>
    <property type="project" value="UniProtKB-UniRule"/>
</dbReference>
<dbReference type="GO" id="GO:0003735">
    <property type="term" value="F:structural constituent of ribosome"/>
    <property type="evidence" value="ECO:0007669"/>
    <property type="project" value="InterPro"/>
</dbReference>
<dbReference type="GO" id="GO:0000049">
    <property type="term" value="F:tRNA binding"/>
    <property type="evidence" value="ECO:0007669"/>
    <property type="project" value="UniProtKB-KW"/>
</dbReference>
<dbReference type="GO" id="GO:0006417">
    <property type="term" value="P:regulation of translation"/>
    <property type="evidence" value="ECO:0007669"/>
    <property type="project" value="UniProtKB-KW"/>
</dbReference>
<dbReference type="GO" id="GO:0006412">
    <property type="term" value="P:translation"/>
    <property type="evidence" value="ECO:0007669"/>
    <property type="project" value="UniProtKB-UniRule"/>
</dbReference>
<dbReference type="CDD" id="cd00403">
    <property type="entry name" value="Ribosomal_L1"/>
    <property type="match status" value="1"/>
</dbReference>
<dbReference type="FunFam" id="3.40.50.790:FF:000001">
    <property type="entry name" value="50S ribosomal protein L1"/>
    <property type="match status" value="1"/>
</dbReference>
<dbReference type="Gene3D" id="3.30.190.20">
    <property type="match status" value="1"/>
</dbReference>
<dbReference type="Gene3D" id="3.40.50.790">
    <property type="match status" value="1"/>
</dbReference>
<dbReference type="HAMAP" id="MF_01318_B">
    <property type="entry name" value="Ribosomal_uL1_B"/>
    <property type="match status" value="1"/>
</dbReference>
<dbReference type="InterPro" id="IPR005878">
    <property type="entry name" value="Ribosom_uL1_bac-type"/>
</dbReference>
<dbReference type="InterPro" id="IPR002143">
    <property type="entry name" value="Ribosomal_uL1"/>
</dbReference>
<dbReference type="InterPro" id="IPR023674">
    <property type="entry name" value="Ribosomal_uL1-like"/>
</dbReference>
<dbReference type="InterPro" id="IPR028364">
    <property type="entry name" value="Ribosomal_uL1/biogenesis"/>
</dbReference>
<dbReference type="InterPro" id="IPR016095">
    <property type="entry name" value="Ribosomal_uL1_3-a/b-sand"/>
</dbReference>
<dbReference type="InterPro" id="IPR023673">
    <property type="entry name" value="Ribosomal_uL1_CS"/>
</dbReference>
<dbReference type="NCBIfam" id="TIGR01169">
    <property type="entry name" value="rplA_bact"/>
    <property type="match status" value="1"/>
</dbReference>
<dbReference type="PANTHER" id="PTHR36427">
    <property type="entry name" value="54S RIBOSOMAL PROTEIN L1, MITOCHONDRIAL"/>
    <property type="match status" value="1"/>
</dbReference>
<dbReference type="PANTHER" id="PTHR36427:SF3">
    <property type="entry name" value="LARGE RIBOSOMAL SUBUNIT PROTEIN UL1M"/>
    <property type="match status" value="1"/>
</dbReference>
<dbReference type="Pfam" id="PF00687">
    <property type="entry name" value="Ribosomal_L1"/>
    <property type="match status" value="1"/>
</dbReference>
<dbReference type="PIRSF" id="PIRSF002155">
    <property type="entry name" value="Ribosomal_L1"/>
    <property type="match status" value="1"/>
</dbReference>
<dbReference type="SUPFAM" id="SSF56808">
    <property type="entry name" value="Ribosomal protein L1"/>
    <property type="match status" value="1"/>
</dbReference>
<dbReference type="PROSITE" id="PS01199">
    <property type="entry name" value="RIBOSOMAL_L1"/>
    <property type="match status" value="1"/>
</dbReference>
<evidence type="ECO:0000255" key="1">
    <source>
        <dbReference type="HAMAP-Rule" id="MF_01318"/>
    </source>
</evidence>
<evidence type="ECO:0000305" key="2"/>
<keyword id="KW-1185">Reference proteome</keyword>
<keyword id="KW-0678">Repressor</keyword>
<keyword id="KW-0687">Ribonucleoprotein</keyword>
<keyword id="KW-0689">Ribosomal protein</keyword>
<keyword id="KW-0694">RNA-binding</keyword>
<keyword id="KW-0699">rRNA-binding</keyword>
<keyword id="KW-0810">Translation regulation</keyword>
<keyword id="KW-0820">tRNA-binding</keyword>
<feature type="chain" id="PRO_1000073218" description="Large ribosomal subunit protein uL1">
    <location>
        <begin position="1"/>
        <end position="229"/>
    </location>
</feature>
<organism>
    <name type="scientific">Desulforamulus reducens (strain ATCC BAA-1160 / DSM 100696 / MI-1)</name>
    <name type="common">Desulfotomaculum reducens</name>
    <dbReference type="NCBI Taxonomy" id="349161"/>
    <lineage>
        <taxon>Bacteria</taxon>
        <taxon>Bacillati</taxon>
        <taxon>Bacillota</taxon>
        <taxon>Clostridia</taxon>
        <taxon>Eubacteriales</taxon>
        <taxon>Peptococcaceae</taxon>
        <taxon>Desulforamulus</taxon>
    </lineage>
</organism>
<name>RL1_DESRM</name>